<evidence type="ECO:0000255" key="1">
    <source>
        <dbReference type="HAMAP-Rule" id="MF_01206"/>
    </source>
</evidence>
<organism>
    <name type="scientific">Xanthomonas campestris pv. campestris (strain ATCC 33913 / DSM 3586 / NCPPB 528 / LMG 568 / P 25)</name>
    <dbReference type="NCBI Taxonomy" id="190485"/>
    <lineage>
        <taxon>Bacteria</taxon>
        <taxon>Pseudomonadati</taxon>
        <taxon>Pseudomonadota</taxon>
        <taxon>Gammaproteobacteria</taxon>
        <taxon>Lysobacterales</taxon>
        <taxon>Lysobacteraceae</taxon>
        <taxon>Xanthomonas</taxon>
    </lineage>
</organism>
<comment type="function">
    <text evidence="1">Part of the MsrPQ system that repairs oxidized periplasmic proteins containing methionine sulfoxide residues (Met-O), using respiratory chain electrons. Thus protects these proteins from oxidative-stress damage caused by reactive species of oxygen and chlorine generated by the host defense mechanisms. MsrPQ is essential for the maintenance of envelope integrity under bleach stress, rescuing a wide series of structurally unrelated periplasmic proteins from methionine oxidation. The catalytic subunit MsrP is non-stereospecific, being able to reduce both (R-) and (S-) diastereoisomers of methionine sulfoxide.</text>
</comment>
<comment type="catalytic activity">
    <reaction evidence="1">
        <text>L-methionyl-[protein] + a quinone + H2O = L-methionyl-(S)-S-oxide-[protein] + a quinol</text>
        <dbReference type="Rhea" id="RHEA:51292"/>
        <dbReference type="Rhea" id="RHEA-COMP:12313"/>
        <dbReference type="Rhea" id="RHEA-COMP:12315"/>
        <dbReference type="ChEBI" id="CHEBI:15377"/>
        <dbReference type="ChEBI" id="CHEBI:16044"/>
        <dbReference type="ChEBI" id="CHEBI:24646"/>
        <dbReference type="ChEBI" id="CHEBI:44120"/>
        <dbReference type="ChEBI" id="CHEBI:132124"/>
    </reaction>
</comment>
<comment type="catalytic activity">
    <reaction evidence="1">
        <text>L-methionyl-[protein] + a quinone + H2O = L-methionyl-(R)-S-oxide-[protein] + a quinol</text>
        <dbReference type="Rhea" id="RHEA:51296"/>
        <dbReference type="Rhea" id="RHEA-COMP:12313"/>
        <dbReference type="Rhea" id="RHEA-COMP:12314"/>
        <dbReference type="ChEBI" id="CHEBI:15377"/>
        <dbReference type="ChEBI" id="CHEBI:16044"/>
        <dbReference type="ChEBI" id="CHEBI:24646"/>
        <dbReference type="ChEBI" id="CHEBI:45764"/>
        <dbReference type="ChEBI" id="CHEBI:132124"/>
    </reaction>
</comment>
<comment type="cofactor">
    <cofactor evidence="1">
        <name>Mo-molybdopterin</name>
        <dbReference type="ChEBI" id="CHEBI:71302"/>
    </cofactor>
    <text evidence="1">Binds 1 Mo-molybdopterin (Mo-MPT) cofactor per subunit.</text>
</comment>
<comment type="subunit">
    <text evidence="1">Heterodimer of a catalytic subunit (MsrP) and a heme-binding subunit (MsrQ).</text>
</comment>
<comment type="subcellular location">
    <subcellularLocation>
        <location evidence="1">Periplasm</location>
    </subcellularLocation>
    <text evidence="1">Is attached to the inner membrane when interacting with the MsrQ subunit.</text>
</comment>
<comment type="PTM">
    <text evidence="1">Predicted to be exported by the Tat system. The position of the signal peptide cleavage has not been experimentally proven.</text>
</comment>
<comment type="similarity">
    <text evidence="1">Belongs to the MsrP family.</text>
</comment>
<proteinExistence type="inferred from homology"/>
<feature type="signal peptide" description="Tat-type signal" evidence="1">
    <location>
        <begin position="1"/>
        <end position="59"/>
    </location>
</feature>
<feature type="chain" id="PRO_0000070699" description="Protein-methionine-sulfoxide reductase catalytic subunit MsrP" evidence="1">
    <location>
        <begin position="60"/>
        <end position="322"/>
    </location>
</feature>
<feature type="binding site" evidence="1">
    <location>
        <position position="79"/>
    </location>
    <ligand>
        <name>Mo-molybdopterin</name>
        <dbReference type="ChEBI" id="CHEBI:71302"/>
    </ligand>
</feature>
<feature type="binding site" evidence="1">
    <location>
        <begin position="82"/>
        <end position="83"/>
    </location>
    <ligand>
        <name>Mo-molybdopterin</name>
        <dbReference type="ChEBI" id="CHEBI:71302"/>
    </ligand>
</feature>
<feature type="binding site" evidence="1">
    <location>
        <position position="137"/>
    </location>
    <ligand>
        <name>Mo-molybdopterin</name>
        <dbReference type="ChEBI" id="CHEBI:71302"/>
    </ligand>
    <ligandPart>
        <name>Mo</name>
        <dbReference type="ChEBI" id="CHEBI:28685"/>
    </ligandPart>
</feature>
<feature type="binding site" evidence="1">
    <location>
        <position position="172"/>
    </location>
    <ligand>
        <name>Mo-molybdopterin</name>
        <dbReference type="ChEBI" id="CHEBI:71302"/>
    </ligand>
</feature>
<feature type="binding site" evidence="1">
    <location>
        <position position="220"/>
    </location>
    <ligand>
        <name>Mo-molybdopterin</name>
        <dbReference type="ChEBI" id="CHEBI:71302"/>
    </ligand>
</feature>
<feature type="binding site" evidence="1">
    <location>
        <position position="225"/>
    </location>
    <ligand>
        <name>Mo-molybdopterin</name>
        <dbReference type="ChEBI" id="CHEBI:71302"/>
    </ligand>
</feature>
<feature type="binding site" evidence="1">
    <location>
        <begin position="236"/>
        <end position="238"/>
    </location>
    <ligand>
        <name>Mo-molybdopterin</name>
        <dbReference type="ChEBI" id="CHEBI:71302"/>
    </ligand>
</feature>
<keyword id="KW-0479">Metal-binding</keyword>
<keyword id="KW-0500">Molybdenum</keyword>
<keyword id="KW-0560">Oxidoreductase</keyword>
<keyword id="KW-0574">Periplasm</keyword>
<keyword id="KW-1185">Reference proteome</keyword>
<keyword id="KW-0732">Signal</keyword>
<name>MSRP_XANCP</name>
<gene>
    <name evidence="1" type="primary">msrP</name>
    <name type="ordered locus">XCC1588</name>
</gene>
<reference key="1">
    <citation type="journal article" date="2002" name="Nature">
        <title>Comparison of the genomes of two Xanthomonas pathogens with differing host specificities.</title>
        <authorList>
            <person name="da Silva A.C.R."/>
            <person name="Ferro J.A."/>
            <person name="Reinach F.C."/>
            <person name="Farah C.S."/>
            <person name="Furlan L.R."/>
            <person name="Quaggio R.B."/>
            <person name="Monteiro-Vitorello C.B."/>
            <person name="Van Sluys M.A."/>
            <person name="Almeida N.F. Jr."/>
            <person name="Alves L.M.C."/>
            <person name="do Amaral A.M."/>
            <person name="Bertolini M.C."/>
            <person name="Camargo L.E.A."/>
            <person name="Camarotte G."/>
            <person name="Cannavan F."/>
            <person name="Cardozo J."/>
            <person name="Chambergo F."/>
            <person name="Ciapina L.P."/>
            <person name="Cicarelli R.M.B."/>
            <person name="Coutinho L.L."/>
            <person name="Cursino-Santos J.R."/>
            <person name="El-Dorry H."/>
            <person name="Faria J.B."/>
            <person name="Ferreira A.J.S."/>
            <person name="Ferreira R.C.C."/>
            <person name="Ferro M.I.T."/>
            <person name="Formighieri E.F."/>
            <person name="Franco M.C."/>
            <person name="Greggio C.C."/>
            <person name="Gruber A."/>
            <person name="Katsuyama A.M."/>
            <person name="Kishi L.T."/>
            <person name="Leite R.P."/>
            <person name="Lemos E.G.M."/>
            <person name="Lemos M.V.F."/>
            <person name="Locali E.C."/>
            <person name="Machado M.A."/>
            <person name="Madeira A.M.B.N."/>
            <person name="Martinez-Rossi N.M."/>
            <person name="Martins E.C."/>
            <person name="Meidanis J."/>
            <person name="Menck C.F.M."/>
            <person name="Miyaki C.Y."/>
            <person name="Moon D.H."/>
            <person name="Moreira L.M."/>
            <person name="Novo M.T.M."/>
            <person name="Okura V.K."/>
            <person name="Oliveira M.C."/>
            <person name="Oliveira V.R."/>
            <person name="Pereira H.A."/>
            <person name="Rossi A."/>
            <person name="Sena J.A.D."/>
            <person name="Silva C."/>
            <person name="de Souza R.F."/>
            <person name="Spinola L.A.F."/>
            <person name="Takita M.A."/>
            <person name="Tamura R.E."/>
            <person name="Teixeira E.C."/>
            <person name="Tezza R.I.D."/>
            <person name="Trindade dos Santos M."/>
            <person name="Truffi D."/>
            <person name="Tsai S.M."/>
            <person name="White F.F."/>
            <person name="Setubal J.C."/>
            <person name="Kitajima J.P."/>
        </authorList>
    </citation>
    <scope>NUCLEOTIDE SEQUENCE [LARGE SCALE GENOMIC DNA]</scope>
    <source>
        <strain>ATCC 33913 / DSM 3586 / NCPPB 528 / LMG 568 / P 25</strain>
    </source>
</reference>
<dbReference type="EC" id="1.8.5.-" evidence="1"/>
<dbReference type="EMBL" id="AE008922">
    <property type="protein sequence ID" value="AAM40883.1"/>
    <property type="molecule type" value="Genomic_DNA"/>
</dbReference>
<dbReference type="RefSeq" id="NP_636959.1">
    <property type="nucleotide sequence ID" value="NC_003902.1"/>
</dbReference>
<dbReference type="RefSeq" id="WP_011036770.1">
    <property type="nucleotide sequence ID" value="NC_003902.1"/>
</dbReference>
<dbReference type="SMR" id="Q8PA98"/>
<dbReference type="STRING" id="190485.XCC1588"/>
<dbReference type="EnsemblBacteria" id="AAM40883">
    <property type="protein sequence ID" value="AAM40883"/>
    <property type="gene ID" value="XCC1588"/>
</dbReference>
<dbReference type="KEGG" id="xcc:XCC1588"/>
<dbReference type="PATRIC" id="fig|190485.4.peg.1701"/>
<dbReference type="eggNOG" id="COG2041">
    <property type="taxonomic scope" value="Bacteria"/>
</dbReference>
<dbReference type="HOGENOM" id="CLU_045520_0_0_6"/>
<dbReference type="OrthoDB" id="9795587at2"/>
<dbReference type="Proteomes" id="UP000001010">
    <property type="component" value="Chromosome"/>
</dbReference>
<dbReference type="GO" id="GO:0042597">
    <property type="term" value="C:periplasmic space"/>
    <property type="evidence" value="ECO:0007669"/>
    <property type="project" value="UniProtKB-SubCell"/>
</dbReference>
<dbReference type="GO" id="GO:0046872">
    <property type="term" value="F:metal ion binding"/>
    <property type="evidence" value="ECO:0007669"/>
    <property type="project" value="UniProtKB-KW"/>
</dbReference>
<dbReference type="GO" id="GO:0043546">
    <property type="term" value="F:molybdopterin cofactor binding"/>
    <property type="evidence" value="ECO:0007669"/>
    <property type="project" value="UniProtKB-UniRule"/>
</dbReference>
<dbReference type="GO" id="GO:0016672">
    <property type="term" value="F:oxidoreductase activity, acting on a sulfur group of donors, quinone or similar compound as acceptor"/>
    <property type="evidence" value="ECO:0007669"/>
    <property type="project" value="UniProtKB-UniRule"/>
</dbReference>
<dbReference type="GO" id="GO:0030091">
    <property type="term" value="P:protein repair"/>
    <property type="evidence" value="ECO:0007669"/>
    <property type="project" value="UniProtKB-UniRule"/>
</dbReference>
<dbReference type="Gene3D" id="3.90.420.10">
    <property type="entry name" value="Oxidoreductase, molybdopterin-binding domain"/>
    <property type="match status" value="1"/>
</dbReference>
<dbReference type="HAMAP" id="MF_01206">
    <property type="entry name" value="MsrP"/>
    <property type="match status" value="1"/>
</dbReference>
<dbReference type="InterPro" id="IPR022867">
    <property type="entry name" value="MsrP"/>
</dbReference>
<dbReference type="InterPro" id="IPR000572">
    <property type="entry name" value="OxRdtase_Mopterin-bd_dom"/>
</dbReference>
<dbReference type="InterPro" id="IPR036374">
    <property type="entry name" value="OxRdtase_Mopterin-bd_sf"/>
</dbReference>
<dbReference type="NCBIfam" id="NF003767">
    <property type="entry name" value="PRK05363.1"/>
    <property type="match status" value="1"/>
</dbReference>
<dbReference type="PANTHER" id="PTHR43032">
    <property type="entry name" value="PROTEIN-METHIONINE-SULFOXIDE REDUCTASE"/>
    <property type="match status" value="1"/>
</dbReference>
<dbReference type="PANTHER" id="PTHR43032:SF3">
    <property type="entry name" value="PROTEIN-METHIONINE-SULFOXIDE REDUCTASE CATALYTIC SUBUNIT MSRP"/>
    <property type="match status" value="1"/>
</dbReference>
<dbReference type="Pfam" id="PF00174">
    <property type="entry name" value="Oxidored_molyb"/>
    <property type="match status" value="1"/>
</dbReference>
<dbReference type="SUPFAM" id="SSF56524">
    <property type="entry name" value="Oxidoreductase molybdopterin-binding domain"/>
    <property type="match status" value="1"/>
</dbReference>
<accession>Q8PA98</accession>
<sequence>MSLRDALKTPSSEITDEAVYRDRRRLLQLFALTPALSVAGCAEADPPPPPKTVVTPAQARSGFRTAEELTRLEDVTSYNNFYEFGTDKTDPSKAAKTLKLSPWSVKVSGECEKPGSLSLDELLKGISAEERIYRLRCVEGWSMVIPWTGVPLGEVLKRFAPTSRAKYVAFTTLADPQQMPGVRYRSINWPYREGLRIDEAMHPLTLLATGLYGKPLPQQNGAPLRLVVPWKYGFKSIKSIVEIRFVEKMPETAWHDLQPSEYGFFSNVNPAVDHPRWSQKTERRIAGTASKLFAERIATKPFNGYADQVASLYAGMDLKKWF</sequence>
<protein>
    <recommendedName>
        <fullName evidence="1">Protein-methionine-sulfoxide reductase catalytic subunit MsrP</fullName>
        <ecNumber evidence="1">1.8.5.-</ecNumber>
    </recommendedName>
</protein>